<keyword id="KW-0488">Methylation</keyword>
<keyword id="KW-0687">Ribonucleoprotein</keyword>
<keyword id="KW-0689">Ribosomal protein</keyword>
<keyword id="KW-0694">RNA-binding</keyword>
<keyword id="KW-0699">rRNA-binding</keyword>
<keyword id="KW-0820">tRNA-binding</keyword>
<proteinExistence type="inferred from homology"/>
<gene>
    <name evidence="2" type="primary">rpsL</name>
    <name type="ordered locus">ACIAD0881</name>
</gene>
<feature type="chain" id="PRO_0000146162" description="Small ribosomal subunit protein uS12">
    <location>
        <begin position="1"/>
        <end position="124"/>
    </location>
</feature>
<feature type="modified residue" description="3-methylthioaspartic acid" evidence="1">
    <location>
        <position position="89"/>
    </location>
</feature>
<evidence type="ECO:0000250" key="1"/>
<evidence type="ECO:0000255" key="2">
    <source>
        <dbReference type="HAMAP-Rule" id="MF_00403"/>
    </source>
</evidence>
<evidence type="ECO:0000305" key="3"/>
<reference key="1">
    <citation type="journal article" date="2004" name="Nucleic Acids Res.">
        <title>Unique features revealed by the genome sequence of Acinetobacter sp. ADP1, a versatile and naturally transformation competent bacterium.</title>
        <authorList>
            <person name="Barbe V."/>
            <person name="Vallenet D."/>
            <person name="Fonknechten N."/>
            <person name="Kreimeyer A."/>
            <person name="Oztas S."/>
            <person name="Labarre L."/>
            <person name="Cruveiller S."/>
            <person name="Robert C."/>
            <person name="Duprat S."/>
            <person name="Wincker P."/>
            <person name="Ornston L.N."/>
            <person name="Weissenbach J."/>
            <person name="Marliere P."/>
            <person name="Cohen G.N."/>
            <person name="Medigue C."/>
        </authorList>
    </citation>
    <scope>NUCLEOTIDE SEQUENCE [LARGE SCALE GENOMIC DNA]</scope>
    <source>
        <strain>ATCC 33305 / BD413 / ADP1</strain>
    </source>
</reference>
<sequence>MATTNQLIRKGRTTLVEKSKVPALKACPQRRGVCTRVYTTTPKKPNSAMRKVCRVRLTSGFEVSSYIGGEGHNLQEHSVVLIRGGRVKDLPGVRYHTVRGSLDCAGVKDRNQSRSKYGTKRPKK</sequence>
<comment type="function">
    <text evidence="2">With S4 and S5 plays an important role in translational accuracy.</text>
</comment>
<comment type="function">
    <text evidence="2">Interacts with and stabilizes bases of the 16S rRNA that are involved in tRNA selection in the A site and with the mRNA backbone. Located at the interface of the 30S and 50S subunits, it traverses the body of the 30S subunit contacting proteins on the other side and probably holding the rRNA structure together. The combined cluster of proteins S8, S12 and S17 appears to hold together the shoulder and platform of the 30S subunit.</text>
</comment>
<comment type="subunit">
    <text evidence="2">Part of the 30S ribosomal subunit. Contacts proteins S8 and S17. May interact with IF1 in the 30S initiation complex.</text>
</comment>
<comment type="similarity">
    <text evidence="2">Belongs to the universal ribosomal protein uS12 family.</text>
</comment>
<accession>Q6FDS8</accession>
<organism>
    <name type="scientific">Acinetobacter baylyi (strain ATCC 33305 / BD413 / ADP1)</name>
    <dbReference type="NCBI Taxonomy" id="62977"/>
    <lineage>
        <taxon>Bacteria</taxon>
        <taxon>Pseudomonadati</taxon>
        <taxon>Pseudomonadota</taxon>
        <taxon>Gammaproteobacteria</taxon>
        <taxon>Moraxellales</taxon>
        <taxon>Moraxellaceae</taxon>
        <taxon>Acinetobacter</taxon>
    </lineage>
</organism>
<protein>
    <recommendedName>
        <fullName evidence="2">Small ribosomal subunit protein uS12</fullName>
    </recommendedName>
    <alternativeName>
        <fullName evidence="3">30S ribosomal protein S12</fullName>
    </alternativeName>
</protein>
<dbReference type="EMBL" id="CR543861">
    <property type="protein sequence ID" value="CAG67780.1"/>
    <property type="molecule type" value="Genomic_DNA"/>
</dbReference>
<dbReference type="RefSeq" id="WP_002050319.1">
    <property type="nucleotide sequence ID" value="NC_005966.1"/>
</dbReference>
<dbReference type="SMR" id="Q6FDS8"/>
<dbReference type="STRING" id="202950.GCA_001485005_02630"/>
<dbReference type="GeneID" id="97177504"/>
<dbReference type="KEGG" id="aci:ACIAD0881"/>
<dbReference type="eggNOG" id="COG0048">
    <property type="taxonomic scope" value="Bacteria"/>
</dbReference>
<dbReference type="HOGENOM" id="CLU_104295_1_2_6"/>
<dbReference type="OrthoDB" id="9802366at2"/>
<dbReference type="BioCyc" id="ASP62977:ACIAD_RS04070-MONOMER"/>
<dbReference type="Proteomes" id="UP000000430">
    <property type="component" value="Chromosome"/>
</dbReference>
<dbReference type="GO" id="GO:0015935">
    <property type="term" value="C:small ribosomal subunit"/>
    <property type="evidence" value="ECO:0007669"/>
    <property type="project" value="InterPro"/>
</dbReference>
<dbReference type="GO" id="GO:0019843">
    <property type="term" value="F:rRNA binding"/>
    <property type="evidence" value="ECO:0007669"/>
    <property type="project" value="UniProtKB-UniRule"/>
</dbReference>
<dbReference type="GO" id="GO:0003735">
    <property type="term" value="F:structural constituent of ribosome"/>
    <property type="evidence" value="ECO:0007669"/>
    <property type="project" value="InterPro"/>
</dbReference>
<dbReference type="GO" id="GO:0000049">
    <property type="term" value="F:tRNA binding"/>
    <property type="evidence" value="ECO:0007669"/>
    <property type="project" value="UniProtKB-UniRule"/>
</dbReference>
<dbReference type="GO" id="GO:0006412">
    <property type="term" value="P:translation"/>
    <property type="evidence" value="ECO:0007669"/>
    <property type="project" value="UniProtKB-UniRule"/>
</dbReference>
<dbReference type="CDD" id="cd03368">
    <property type="entry name" value="Ribosomal_S12"/>
    <property type="match status" value="1"/>
</dbReference>
<dbReference type="FunFam" id="2.40.50.140:FF:000001">
    <property type="entry name" value="30S ribosomal protein S12"/>
    <property type="match status" value="1"/>
</dbReference>
<dbReference type="Gene3D" id="2.40.50.140">
    <property type="entry name" value="Nucleic acid-binding proteins"/>
    <property type="match status" value="1"/>
</dbReference>
<dbReference type="HAMAP" id="MF_00403_B">
    <property type="entry name" value="Ribosomal_uS12_B"/>
    <property type="match status" value="1"/>
</dbReference>
<dbReference type="InterPro" id="IPR012340">
    <property type="entry name" value="NA-bd_OB-fold"/>
</dbReference>
<dbReference type="InterPro" id="IPR006032">
    <property type="entry name" value="Ribosomal_uS12"/>
</dbReference>
<dbReference type="InterPro" id="IPR005679">
    <property type="entry name" value="Ribosomal_uS12_bac"/>
</dbReference>
<dbReference type="NCBIfam" id="TIGR00981">
    <property type="entry name" value="rpsL_bact"/>
    <property type="match status" value="1"/>
</dbReference>
<dbReference type="PANTHER" id="PTHR11652">
    <property type="entry name" value="30S RIBOSOMAL PROTEIN S12 FAMILY MEMBER"/>
    <property type="match status" value="1"/>
</dbReference>
<dbReference type="Pfam" id="PF00164">
    <property type="entry name" value="Ribosom_S12_S23"/>
    <property type="match status" value="1"/>
</dbReference>
<dbReference type="PIRSF" id="PIRSF002133">
    <property type="entry name" value="Ribosomal_S12/S23"/>
    <property type="match status" value="1"/>
</dbReference>
<dbReference type="PRINTS" id="PR01034">
    <property type="entry name" value="RIBOSOMALS12"/>
</dbReference>
<dbReference type="SUPFAM" id="SSF50249">
    <property type="entry name" value="Nucleic acid-binding proteins"/>
    <property type="match status" value="1"/>
</dbReference>
<dbReference type="PROSITE" id="PS00055">
    <property type="entry name" value="RIBOSOMAL_S12"/>
    <property type="match status" value="1"/>
</dbReference>
<name>RS12_ACIAD</name>